<gene>
    <name evidence="1" type="primary">nuoD</name>
    <name type="ordered locus">RPE_2523</name>
</gene>
<comment type="function">
    <text evidence="1">NDH-1 shuttles electrons from NADH, via FMN and iron-sulfur (Fe-S) centers, to quinones in the respiratory chain. The immediate electron acceptor for the enzyme in this species is believed to be ubiquinone. Couples the redox reaction to proton translocation (for every two electrons transferred, four hydrogen ions are translocated across the cytoplasmic membrane), and thus conserves the redox energy in a proton gradient.</text>
</comment>
<comment type="catalytic activity">
    <reaction evidence="1">
        <text>a quinone + NADH + 5 H(+)(in) = a quinol + NAD(+) + 4 H(+)(out)</text>
        <dbReference type="Rhea" id="RHEA:57888"/>
        <dbReference type="ChEBI" id="CHEBI:15378"/>
        <dbReference type="ChEBI" id="CHEBI:24646"/>
        <dbReference type="ChEBI" id="CHEBI:57540"/>
        <dbReference type="ChEBI" id="CHEBI:57945"/>
        <dbReference type="ChEBI" id="CHEBI:132124"/>
    </reaction>
</comment>
<comment type="subunit">
    <text evidence="1">NDH-1 is composed of 14 different subunits. Subunits NuoB, C, D, E, F, and G constitute the peripheral sector of the complex.</text>
</comment>
<comment type="subcellular location">
    <subcellularLocation>
        <location evidence="1">Cell inner membrane</location>
        <topology evidence="1">Peripheral membrane protein</topology>
        <orientation evidence="1">Cytoplasmic side</orientation>
    </subcellularLocation>
</comment>
<comment type="similarity">
    <text evidence="1">Belongs to the complex I 49 kDa subunit family.</text>
</comment>
<organism>
    <name type="scientific">Rhodopseudomonas palustris (strain BisA53)</name>
    <dbReference type="NCBI Taxonomy" id="316055"/>
    <lineage>
        <taxon>Bacteria</taxon>
        <taxon>Pseudomonadati</taxon>
        <taxon>Pseudomonadota</taxon>
        <taxon>Alphaproteobacteria</taxon>
        <taxon>Hyphomicrobiales</taxon>
        <taxon>Nitrobacteraceae</taxon>
        <taxon>Rhodopseudomonas</taxon>
    </lineage>
</organism>
<accession>Q07NM3</accession>
<dbReference type="EC" id="7.1.1.-" evidence="1"/>
<dbReference type="EMBL" id="CP000463">
    <property type="protein sequence ID" value="ABJ06461.1"/>
    <property type="molecule type" value="Genomic_DNA"/>
</dbReference>
<dbReference type="SMR" id="Q07NM3"/>
<dbReference type="STRING" id="316055.RPE_2523"/>
<dbReference type="KEGG" id="rpe:RPE_2523"/>
<dbReference type="eggNOG" id="COG0649">
    <property type="taxonomic scope" value="Bacteria"/>
</dbReference>
<dbReference type="HOGENOM" id="CLU_015134_1_1_5"/>
<dbReference type="OrthoDB" id="9801496at2"/>
<dbReference type="GO" id="GO:0005886">
    <property type="term" value="C:plasma membrane"/>
    <property type="evidence" value="ECO:0007669"/>
    <property type="project" value="UniProtKB-SubCell"/>
</dbReference>
<dbReference type="GO" id="GO:0051287">
    <property type="term" value="F:NAD binding"/>
    <property type="evidence" value="ECO:0007669"/>
    <property type="project" value="InterPro"/>
</dbReference>
<dbReference type="GO" id="GO:0050136">
    <property type="term" value="F:NADH:ubiquinone reductase (non-electrogenic) activity"/>
    <property type="evidence" value="ECO:0007669"/>
    <property type="project" value="UniProtKB-UniRule"/>
</dbReference>
<dbReference type="GO" id="GO:0048038">
    <property type="term" value="F:quinone binding"/>
    <property type="evidence" value="ECO:0007669"/>
    <property type="project" value="UniProtKB-KW"/>
</dbReference>
<dbReference type="FunFam" id="1.10.645.10:FF:000005">
    <property type="entry name" value="NADH-quinone oxidoreductase subunit D"/>
    <property type="match status" value="1"/>
</dbReference>
<dbReference type="Gene3D" id="1.10.645.10">
    <property type="entry name" value="Cytochrome-c3 Hydrogenase, chain B"/>
    <property type="match status" value="1"/>
</dbReference>
<dbReference type="HAMAP" id="MF_01358">
    <property type="entry name" value="NDH1_NuoD"/>
    <property type="match status" value="1"/>
</dbReference>
<dbReference type="InterPro" id="IPR001135">
    <property type="entry name" value="NADH_Q_OxRdtase_suD"/>
</dbReference>
<dbReference type="InterPro" id="IPR014029">
    <property type="entry name" value="NADH_UbQ_OxRdtase_49kDa_CS"/>
</dbReference>
<dbReference type="InterPro" id="IPR022885">
    <property type="entry name" value="NDH1_su_D/H"/>
</dbReference>
<dbReference type="InterPro" id="IPR029014">
    <property type="entry name" value="NiFe-Hase_large"/>
</dbReference>
<dbReference type="NCBIfam" id="TIGR01962">
    <property type="entry name" value="NuoD"/>
    <property type="match status" value="1"/>
</dbReference>
<dbReference type="NCBIfam" id="NF004739">
    <property type="entry name" value="PRK06075.1"/>
    <property type="match status" value="1"/>
</dbReference>
<dbReference type="PANTHER" id="PTHR11993:SF10">
    <property type="entry name" value="NADH DEHYDROGENASE [UBIQUINONE] IRON-SULFUR PROTEIN 2, MITOCHONDRIAL"/>
    <property type="match status" value="1"/>
</dbReference>
<dbReference type="PANTHER" id="PTHR11993">
    <property type="entry name" value="NADH-UBIQUINONE OXIDOREDUCTASE 49 KDA SUBUNIT"/>
    <property type="match status" value="1"/>
</dbReference>
<dbReference type="Pfam" id="PF00346">
    <property type="entry name" value="Complex1_49kDa"/>
    <property type="match status" value="1"/>
</dbReference>
<dbReference type="SUPFAM" id="SSF56762">
    <property type="entry name" value="HydB/Nqo4-like"/>
    <property type="match status" value="1"/>
</dbReference>
<dbReference type="PROSITE" id="PS00535">
    <property type="entry name" value="COMPLEX1_49K"/>
    <property type="match status" value="1"/>
</dbReference>
<protein>
    <recommendedName>
        <fullName evidence="1">NADH-quinone oxidoreductase subunit D</fullName>
        <ecNumber evidence="1">7.1.1.-</ecNumber>
    </recommendedName>
    <alternativeName>
        <fullName evidence="1">NADH dehydrogenase I subunit D</fullName>
    </alternativeName>
    <alternativeName>
        <fullName evidence="1">NDH-1 subunit D</fullName>
    </alternativeName>
</protein>
<sequence length="396" mass="44674">MPEGALRNFTINFGPQHPAAHGVLRLVLELDGEVVERVDPHIGLLHRGTEKLIEQKTYLQAIPYFDRLDYVAPMNQEHAFCLAAEKLLGIAVPRRAQLIRVLYCEIGRILSHLLNVTTQAMDVGALTPPLWGFEEREKLMVFYERASGSRMHAAYFRIGGVHQDLPPQLIEDIETWCDAFPQVVDDLDRLLTGNRIFKQRNVDIGVVTLPQAWEWGFSGVMVRGSGAAWDLRKSQPYECYAEMDFDVPIGKNGDCYDRYLLRMEEMRQSVSIMKQCIAKLRAPDGQGPVALEDHKIVPPRRGEMKRSMEALIHHFKLYTEGFRVPAGEVYVAVEAPKGEFGVFLVSDGTNKPYKCKIRAPGFAHLQAMDFVTRGHLLADVSAILGSLDIVFGEVDR</sequence>
<feature type="chain" id="PRO_0000357904" description="NADH-quinone oxidoreductase subunit D">
    <location>
        <begin position="1"/>
        <end position="396"/>
    </location>
</feature>
<keyword id="KW-0997">Cell inner membrane</keyword>
<keyword id="KW-1003">Cell membrane</keyword>
<keyword id="KW-0472">Membrane</keyword>
<keyword id="KW-0520">NAD</keyword>
<keyword id="KW-0874">Quinone</keyword>
<keyword id="KW-1278">Translocase</keyword>
<keyword id="KW-0813">Transport</keyword>
<keyword id="KW-0830">Ubiquinone</keyword>
<name>NUOD_RHOP5</name>
<evidence type="ECO:0000255" key="1">
    <source>
        <dbReference type="HAMAP-Rule" id="MF_01358"/>
    </source>
</evidence>
<proteinExistence type="inferred from homology"/>
<reference key="1">
    <citation type="submission" date="2006-09" db="EMBL/GenBank/DDBJ databases">
        <title>Complete sequence of Rhodopseudomonas palustris BisA53.</title>
        <authorList>
            <consortium name="US DOE Joint Genome Institute"/>
            <person name="Copeland A."/>
            <person name="Lucas S."/>
            <person name="Lapidus A."/>
            <person name="Barry K."/>
            <person name="Detter J.C."/>
            <person name="Glavina del Rio T."/>
            <person name="Hammon N."/>
            <person name="Israni S."/>
            <person name="Dalin E."/>
            <person name="Tice H."/>
            <person name="Pitluck S."/>
            <person name="Chain P."/>
            <person name="Malfatti S."/>
            <person name="Shin M."/>
            <person name="Vergez L."/>
            <person name="Schmutz J."/>
            <person name="Larimer F."/>
            <person name="Land M."/>
            <person name="Hauser L."/>
            <person name="Pelletier D.A."/>
            <person name="Kyrpides N."/>
            <person name="Kim E."/>
            <person name="Harwood C.S."/>
            <person name="Oda Y."/>
            <person name="Richardson P."/>
        </authorList>
    </citation>
    <scope>NUCLEOTIDE SEQUENCE [LARGE SCALE GENOMIC DNA]</scope>
    <source>
        <strain>BisA53</strain>
    </source>
</reference>